<protein>
    <recommendedName>
        <fullName evidence="11">Palmitoyltransferase ZDHHC20</fullName>
        <ecNumber evidence="4 5">2.3.1.225</ecNumber>
    </recommendedName>
    <alternativeName>
        <fullName evidence="12">Acyltransferase ZDHHC20</fullName>
        <ecNumber evidence="12">2.3.1.-</ecNumber>
    </alternativeName>
    <alternativeName>
        <fullName evidence="9">DHHC domain-containing cysteine-rich protein 20</fullName>
        <shortName evidence="9">DHHC20</shortName>
    </alternativeName>
    <alternativeName>
        <fullName evidence="14">Zinc finger DHHC domain-containing protein 20</fullName>
    </alternativeName>
</protein>
<evidence type="ECO:0000250" key="1">
    <source>
        <dbReference type="UniProtKB" id="Q5Y5T1"/>
    </source>
</evidence>
<evidence type="ECO:0000255" key="2"/>
<evidence type="ECO:0000255" key="3">
    <source>
        <dbReference type="PROSITE-ProRule" id="PRU00067"/>
    </source>
</evidence>
<evidence type="ECO:0000269" key="4">
    <source>
    </source>
</evidence>
<evidence type="ECO:0000269" key="5">
    <source>
    </source>
</evidence>
<evidence type="ECO:0000269" key="6">
    <source>
    </source>
</evidence>
<evidence type="ECO:0000269" key="7">
    <source>
    </source>
</evidence>
<evidence type="ECO:0000303" key="8">
    <source>
    </source>
</evidence>
<evidence type="ECO:0000303" key="9">
    <source>
    </source>
</evidence>
<evidence type="ECO:0000305" key="10"/>
<evidence type="ECO:0000305" key="11">
    <source>
    </source>
</evidence>
<evidence type="ECO:0000305" key="12">
    <source>
    </source>
</evidence>
<evidence type="ECO:0000305" key="13">
    <source>
    </source>
</evidence>
<evidence type="ECO:0000312" key="14">
    <source>
        <dbReference type="HGNC" id="HGNC:20749"/>
    </source>
</evidence>
<evidence type="ECO:0007744" key="15">
    <source>
        <dbReference type="PDB" id="6BML"/>
    </source>
</evidence>
<evidence type="ECO:0007744" key="16">
    <source>
        <dbReference type="PDB" id="6BMM"/>
    </source>
</evidence>
<evidence type="ECO:0007744" key="17">
    <source>
        <dbReference type="PDB" id="6BMN"/>
    </source>
</evidence>
<evidence type="ECO:0007744" key="18">
    <source>
    </source>
</evidence>
<evidence type="ECO:0007744" key="19">
    <source>
    </source>
</evidence>
<evidence type="ECO:0007829" key="20">
    <source>
        <dbReference type="PDB" id="6BMN"/>
    </source>
</evidence>
<feature type="chain" id="PRO_0000212906" description="Palmitoyltransferase ZDHHC20">
    <location>
        <begin position="1"/>
        <end position="365"/>
    </location>
</feature>
<feature type="topological domain" description="Cytoplasmic" evidence="5">
    <location>
        <begin position="1"/>
        <end position="14"/>
    </location>
</feature>
<feature type="transmembrane region" description="Helical" evidence="5">
    <location>
        <begin position="15"/>
        <end position="35"/>
    </location>
</feature>
<feature type="topological domain" description="Lumenal" evidence="5">
    <location>
        <begin position="36"/>
        <end position="53"/>
    </location>
</feature>
<feature type="transmembrane region" description="Helical" evidence="5">
    <location>
        <begin position="54"/>
        <end position="74"/>
    </location>
</feature>
<feature type="topological domain" description="Cytoplasmic" evidence="5">
    <location>
        <begin position="75"/>
        <end position="169"/>
    </location>
</feature>
<feature type="transmembrane region" description="Helical" evidence="5">
    <location>
        <begin position="170"/>
        <end position="190"/>
    </location>
</feature>
<feature type="topological domain" description="Lumenal" evidence="5">
    <location>
        <begin position="191"/>
        <end position="207"/>
    </location>
</feature>
<feature type="transmembrane region" description="Helical" evidence="5">
    <location>
        <begin position="208"/>
        <end position="231"/>
    </location>
</feature>
<feature type="topological domain" description="Cytoplasmic" evidence="5">
    <location>
        <begin position="232"/>
        <end position="365"/>
    </location>
</feature>
<feature type="domain" description="DHHC" evidence="3">
    <location>
        <begin position="126"/>
        <end position="176"/>
    </location>
</feature>
<feature type="active site" description="S-palmitoyl cysteine intermediate" evidence="5">
    <location>
        <position position="156"/>
    </location>
</feature>
<feature type="binding site" evidence="5 17">
    <location>
        <position position="128"/>
    </location>
    <ligand>
        <name>Zn(2+)</name>
        <dbReference type="ChEBI" id="CHEBI:29105"/>
        <label>1</label>
    </ligand>
</feature>
<feature type="binding site" evidence="5 17">
    <location>
        <position position="131"/>
    </location>
    <ligand>
        <name>Zn(2+)</name>
        <dbReference type="ChEBI" id="CHEBI:29105"/>
        <label>1</label>
    </ligand>
</feature>
<feature type="binding site" evidence="12">
    <location>
        <position position="135"/>
    </location>
    <ligand>
        <name>substrate</name>
    </ligand>
</feature>
<feature type="binding site" evidence="12">
    <location>
        <begin position="140"/>
        <end position="143"/>
    </location>
    <ligand>
        <name>substrate</name>
    </ligand>
</feature>
<feature type="binding site" evidence="5 17">
    <location>
        <position position="141"/>
    </location>
    <ligand>
        <name>Zn(2+)</name>
        <dbReference type="ChEBI" id="CHEBI:29105"/>
        <label>1</label>
    </ligand>
</feature>
<feature type="binding site" evidence="5 17">
    <location>
        <position position="142"/>
    </location>
    <ligand>
        <name>Zn(2+)</name>
        <dbReference type="ChEBI" id="CHEBI:29105"/>
        <label>2</label>
    </ligand>
</feature>
<feature type="binding site" evidence="5 17">
    <location>
        <position position="145"/>
    </location>
    <ligand>
        <name>Zn(2+)</name>
        <dbReference type="ChEBI" id="CHEBI:29105"/>
        <label>2</label>
    </ligand>
</feature>
<feature type="binding site" evidence="5 17">
    <location>
        <position position="148"/>
    </location>
    <ligand>
        <name>Zn(2+)</name>
        <dbReference type="ChEBI" id="CHEBI:29105"/>
        <label>1</label>
    </ligand>
</feature>
<feature type="binding site" evidence="5 17">
    <location>
        <position position="155"/>
    </location>
    <ligand>
        <name>Zn(2+)</name>
        <dbReference type="ChEBI" id="CHEBI:29105"/>
        <label>2</label>
    </ligand>
</feature>
<feature type="binding site" evidence="5 17">
    <location>
        <position position="162"/>
    </location>
    <ligand>
        <name>Zn(2+)</name>
        <dbReference type="ChEBI" id="CHEBI:29105"/>
        <label>2</label>
    </ligand>
</feature>
<feature type="site" description="Important for selectivity toward medium-length fatty acids" evidence="5">
    <location>
        <position position="29"/>
    </location>
</feature>
<feature type="site" description="Important for selectivity toward medium-length fatty acids" evidence="5">
    <location>
        <position position="181"/>
    </location>
</feature>
<feature type="modified residue" description="Phosphoserine" evidence="19">
    <location>
        <position position="305"/>
    </location>
</feature>
<feature type="modified residue" description="Phosphoserine" evidence="19">
    <location>
        <position position="330"/>
    </location>
</feature>
<feature type="modified residue" description="Phosphoserine" evidence="18">
    <location>
        <position position="339"/>
    </location>
</feature>
<feature type="splice variant" id="VSP_016276" description="In isoform 2." evidence="8">
    <original>TIRYCEK</original>
    <variation>SLMQSTK</variation>
    <location>
        <begin position="124"/>
        <end position="130"/>
    </location>
</feature>
<feature type="splice variant" id="VSP_016277" description="In isoform 2." evidence="8">
    <location>
        <begin position="131"/>
        <end position="365"/>
    </location>
</feature>
<feature type="splice variant" id="VSP_056002" description="In isoform 4." evidence="8">
    <original>SSGSNQPFPIKPLSESKNRLLDSESQWLENGAEEGIVKSGTNNHVTVAIEN</original>
    <variation>RSKLQR</variation>
    <location>
        <begin position="315"/>
        <end position="365"/>
    </location>
</feature>
<feature type="splice variant" id="VSP_040481" description="In isoform 3." evidence="8">
    <location>
        <position position="315"/>
    </location>
</feature>
<feature type="splice variant" id="VSP_040482" description="In isoform 3." evidence="8">
    <original>TNNHVTVAIEN</original>
    <variation>V</variation>
    <location>
        <begin position="355"/>
        <end position="365"/>
    </location>
</feature>
<feature type="mutagenesis site" description="Strongly reduced catalytic activity." evidence="5">
    <original>I</original>
    <variation>W</variation>
    <location>
        <position position="22"/>
    </location>
</feature>
<feature type="mutagenesis site" description="Strongly reduced catalytic activity. Enhances activity with acyl-CoA with C12 and C14 fatty acid chains." evidence="5">
    <original>S</original>
    <variation>F</variation>
    <location>
        <position position="29"/>
    </location>
</feature>
<feature type="mutagenesis site" description="Loss of catalytic activity." evidence="5">
    <original>D</original>
    <variation>A</variation>
    <location>
        <position position="153"/>
    </location>
</feature>
<feature type="mutagenesis site" description="Loss of catalytic activity." evidence="5">
    <original>H</original>
    <variation>A</variation>
    <location>
        <position position="154"/>
    </location>
</feature>
<feature type="mutagenesis site" description="Loss of catalytic activity." evidence="5">
    <original>C</original>
    <variation>S</variation>
    <location>
        <position position="156"/>
    </location>
</feature>
<feature type="mutagenesis site" description="Strongly reduced catalytic activity." evidence="5">
    <original>W</original>
    <variation>A</variation>
    <location>
        <position position="158"/>
    </location>
</feature>
<feature type="mutagenesis site" description="Loss of catalytic activity." evidence="5">
    <original>F</original>
    <variation>A</variation>
    <location>
        <position position="171"/>
    </location>
</feature>
<feature type="mutagenesis site" description="Strongly reduced catalytic activity." evidence="5">
    <original>F</original>
    <variation>A</variation>
    <location>
        <position position="174"/>
    </location>
</feature>
<feature type="mutagenesis site" description="Moderately reduced catalytic activity. Enhances activity with acyl-CoA with C18 and C20 fatty acid chains." evidence="5">
    <original>Y</original>
    <variation>A</variation>
    <location>
        <position position="181"/>
    </location>
</feature>
<feature type="mutagenesis site" description="Loss of catalytic activity." evidence="5">
    <original>L</original>
    <variation>W</variation>
    <location>
        <position position="227"/>
    </location>
</feature>
<feature type="mutagenesis site" description="Loss of catalytic activity." evidence="5">
    <original>TT</original>
    <variation>AA</variation>
    <location>
        <begin position="240"/>
        <end position="241"/>
    </location>
</feature>
<feature type="mutagenesis site" description="Mildly reduced catalytic activity." evidence="5">
    <original>E</original>
    <variation>A</variation>
    <location>
        <position position="243"/>
    </location>
</feature>
<feature type="mutagenesis site" description="Strongly reduced catalytic activity." evidence="5">
    <original>N</original>
    <variation>A</variation>
    <location>
        <position position="266"/>
    </location>
</feature>
<feature type="mutagenesis site" description="Loss of catalytic activity." evidence="5">
    <location>
        <position position="267"/>
    </location>
</feature>
<feature type="mutagenesis site" description="Mildly reduced catalytic activity." evidence="5">
    <original>F</original>
    <variation>A</variation>
    <location>
        <position position="271"/>
    </location>
</feature>
<feature type="helix" evidence="20">
    <location>
        <begin position="7"/>
        <end position="14"/>
    </location>
</feature>
<feature type="helix" evidence="20">
    <location>
        <begin position="17"/>
        <end position="34"/>
    </location>
</feature>
<feature type="helix" evidence="20">
    <location>
        <begin position="35"/>
        <end position="42"/>
    </location>
</feature>
<feature type="turn" evidence="20">
    <location>
        <begin position="43"/>
        <end position="46"/>
    </location>
</feature>
<feature type="helix" evidence="20">
    <location>
        <begin position="48"/>
        <end position="74"/>
    </location>
</feature>
<feature type="helix" evidence="20">
    <location>
        <begin position="82"/>
        <end position="84"/>
    </location>
</feature>
<feature type="helix" evidence="20">
    <location>
        <begin position="90"/>
        <end position="96"/>
    </location>
</feature>
<feature type="helix" evidence="20">
    <location>
        <begin position="100"/>
        <end position="111"/>
    </location>
</feature>
<feature type="turn" evidence="20">
    <location>
        <begin position="112"/>
        <end position="115"/>
    </location>
</feature>
<feature type="turn" evidence="20">
    <location>
        <begin position="129"/>
        <end position="132"/>
    </location>
</feature>
<feature type="strand" evidence="20">
    <location>
        <begin position="140"/>
        <end position="142"/>
    </location>
</feature>
<feature type="turn" evidence="20">
    <location>
        <begin position="143"/>
        <end position="146"/>
    </location>
</feature>
<feature type="strand" evidence="20">
    <location>
        <begin position="147"/>
        <end position="149"/>
    </location>
</feature>
<feature type="strand" evidence="20">
    <location>
        <begin position="154"/>
        <end position="156"/>
    </location>
</feature>
<feature type="helix" evidence="20">
    <location>
        <begin position="157"/>
        <end position="159"/>
    </location>
</feature>
<feature type="strand" evidence="20">
    <location>
        <begin position="161"/>
        <end position="164"/>
    </location>
</feature>
<feature type="turn" evidence="20">
    <location>
        <begin position="165"/>
        <end position="167"/>
    </location>
</feature>
<feature type="helix" evidence="20">
    <location>
        <begin position="168"/>
        <end position="197"/>
    </location>
</feature>
<feature type="helix" evidence="20">
    <location>
        <begin position="204"/>
        <end position="237"/>
    </location>
</feature>
<feature type="helix" evidence="20">
    <location>
        <begin position="241"/>
        <end position="245"/>
    </location>
</feature>
<feature type="turn" evidence="20">
    <location>
        <begin position="256"/>
        <end position="259"/>
    </location>
</feature>
<feature type="helix" evidence="20">
    <location>
        <begin position="263"/>
        <end position="271"/>
    </location>
</feature>
<feature type="helix" evidence="20">
    <location>
        <begin position="275"/>
        <end position="277"/>
    </location>
</feature>
<feature type="strand" evidence="20">
    <location>
        <begin position="280"/>
        <end position="282"/>
    </location>
</feature>
<feature type="strand" evidence="20">
    <location>
        <begin position="295"/>
        <end position="297"/>
    </location>
</feature>
<proteinExistence type="evidence at protein level"/>
<comment type="function">
    <text evidence="1 4 5 6">Palmitoyltransferase that could catalyze the addition of palmitate onto various protein substrates (PubMed:27153536, PubMed:29326245, PubMed:33219126). Catalyzes palmitoylation of Cys residues in the cytoplasmic C-terminus of EGFR, and modulates the duration of EGFR signaling by modulating palmitoylation-dependent EGFR internalization and degradation (PubMed:27153536). Has a preference for acyl-CoA with C16 fatty acid chains (PubMed:29326245). Can also utilize acyl-CoA with C14 and C18 fatty acid chains (PubMed:29326245). May palmitoylate CALHM1 subunit of gustatory voltage-gated ion channels and modulate channel gating and kinetics.</text>
</comment>
<comment type="function">
    <text evidence="7">(Microbial infection) Dominant palmitoyltransferase responsible for lipidation of SARS coronavirus-2/SARS-CoV-2 spike protein. Through a sequential action with ZDHHC9, rapidly and efficiently palmitoylates spike protein following its synthesis in the endoplasmic reticulum (ER). In the infected cell, promotes spike biogenesis by protecting it from premature ER degradation, increases half-life and controls the lipid organization of its immediate membrane environment. Once the virus has formed, spike palmitoylation controls fusion with the target cell.</text>
</comment>
<comment type="catalytic activity">
    <reaction evidence="5 6 7">
        <text>L-cysteinyl-[protein] + hexadecanoyl-CoA = S-hexadecanoyl-L-cysteinyl-[protein] + CoA</text>
        <dbReference type="Rhea" id="RHEA:36683"/>
        <dbReference type="Rhea" id="RHEA-COMP:10131"/>
        <dbReference type="Rhea" id="RHEA-COMP:11032"/>
        <dbReference type="ChEBI" id="CHEBI:29950"/>
        <dbReference type="ChEBI" id="CHEBI:57287"/>
        <dbReference type="ChEBI" id="CHEBI:57379"/>
        <dbReference type="ChEBI" id="CHEBI:74151"/>
        <dbReference type="EC" id="2.3.1.225"/>
    </reaction>
    <physiologicalReaction direction="left-to-right" evidence="12">
        <dbReference type="Rhea" id="RHEA:36684"/>
    </physiologicalReaction>
</comment>
<comment type="catalytic activity">
    <reaction evidence="5">
        <text>L-cysteinyl-[protein] + tetradecanoyl-CoA = S-tetradecanoyl-L-cysteinyl-[protein] + CoA</text>
        <dbReference type="Rhea" id="RHEA:59736"/>
        <dbReference type="Rhea" id="RHEA-COMP:10131"/>
        <dbReference type="Rhea" id="RHEA-COMP:15433"/>
        <dbReference type="ChEBI" id="CHEBI:29950"/>
        <dbReference type="ChEBI" id="CHEBI:57287"/>
        <dbReference type="ChEBI" id="CHEBI:57385"/>
        <dbReference type="ChEBI" id="CHEBI:143199"/>
    </reaction>
    <physiologicalReaction direction="left-to-right" evidence="12">
        <dbReference type="Rhea" id="RHEA:59737"/>
    </physiologicalReaction>
</comment>
<comment type="catalytic activity">
    <reaction evidence="5">
        <text>L-cysteinyl-[protein] + octadecanoyl-CoA = S-octadecanoyl-L-cysteinyl-[protein] + CoA</text>
        <dbReference type="Rhea" id="RHEA:59740"/>
        <dbReference type="Rhea" id="RHEA-COMP:10131"/>
        <dbReference type="Rhea" id="RHEA-COMP:15434"/>
        <dbReference type="ChEBI" id="CHEBI:29950"/>
        <dbReference type="ChEBI" id="CHEBI:57287"/>
        <dbReference type="ChEBI" id="CHEBI:57394"/>
        <dbReference type="ChEBI" id="CHEBI:143200"/>
    </reaction>
    <physiologicalReaction direction="left-to-right" evidence="12">
        <dbReference type="Rhea" id="RHEA:59741"/>
    </physiologicalReaction>
</comment>
<comment type="interaction">
    <interactant intactId="EBI-25840130">
        <id>Q5W0Z9-4</id>
    </interactant>
    <interactant intactId="EBI-2115097">
        <id>P07339</id>
        <label>CTSD</label>
    </interactant>
    <organismsDiffer>false</organismsDiffer>
    <experiments>3</experiments>
</comment>
<comment type="interaction">
    <interactant intactId="EBI-25840130">
        <id>Q5W0Z9-4</id>
    </interactant>
    <interactant intactId="EBI-396669">
        <id>Q9Y3C5</id>
        <label>RNF11</label>
    </interactant>
    <organismsDiffer>false</organismsDiffer>
    <experiments>3</experiments>
</comment>
<comment type="interaction">
    <interactant intactId="EBI-25840130">
        <id>Q5W0Z9-4</id>
    </interactant>
    <interactant intactId="EBI-720609">
        <id>O76024</id>
        <label>WFS1</label>
    </interactant>
    <organismsDiffer>false</organismsDiffer>
    <experiments>3</experiments>
</comment>
<comment type="subcellular location">
    <subcellularLocation>
        <location evidence="5">Golgi apparatus membrane</location>
        <topology evidence="5">Multi-pass membrane protein</topology>
    </subcellularLocation>
    <subcellularLocation>
        <location evidence="4">Cell membrane</location>
        <topology evidence="5">Multi-pass membrane protein</topology>
    </subcellularLocation>
    <subcellularLocation>
        <location evidence="4">Cytoplasm</location>
        <location evidence="4">Perinuclear region</location>
    </subcellularLocation>
    <subcellularLocation>
        <location evidence="13">Endoplasmic reticulum membrane</location>
        <topology evidence="2">Multi-pass membrane protein</topology>
    </subcellularLocation>
    <subcellularLocation>
        <location evidence="13">Endoplasmic reticulum-Golgi intermediate compartment membrane</location>
        <topology evidence="2">Multi-pass membrane protein</topology>
    </subcellularLocation>
</comment>
<comment type="alternative products">
    <event type="alternative splicing"/>
    <isoform>
        <id>Q5W0Z9-1</id>
        <name>1</name>
        <sequence type="displayed"/>
    </isoform>
    <isoform>
        <id>Q5W0Z9-2</id>
        <name>2</name>
        <sequence type="described" ref="VSP_016276 VSP_016277"/>
    </isoform>
    <isoform>
        <id>Q5W0Z9-3</id>
        <name>3</name>
        <sequence type="described" ref="VSP_040481 VSP_040482"/>
    </isoform>
    <isoform>
        <id>Q5W0Z9-4</id>
        <name>4</name>
        <sequence type="described" ref="VSP_056002"/>
    </isoform>
</comment>
<comment type="domain">
    <text evidence="5">The DHHC domain is required for palmitoyltransferase activity.</text>
</comment>
<comment type="PTM">
    <text evidence="5">Autopalmitoylated (in vitro).</text>
</comment>
<comment type="similarity">
    <text evidence="10">Belongs to the DHHC palmitoyltransferase family.</text>
</comment>
<name>ZDH20_HUMAN</name>
<accession>Q5W0Z9</accession>
<accession>A8MTV9</accession>
<accession>C9JG20</accession>
<accession>I6L9D4</accession>
<accession>Q2TB82</accession>
<accession>Q6NVU8</accession>
<organism>
    <name type="scientific">Homo sapiens</name>
    <name type="common">Human</name>
    <dbReference type="NCBI Taxonomy" id="9606"/>
    <lineage>
        <taxon>Eukaryota</taxon>
        <taxon>Metazoa</taxon>
        <taxon>Chordata</taxon>
        <taxon>Craniata</taxon>
        <taxon>Vertebrata</taxon>
        <taxon>Euteleostomi</taxon>
        <taxon>Mammalia</taxon>
        <taxon>Eutheria</taxon>
        <taxon>Euarchontoglires</taxon>
        <taxon>Primates</taxon>
        <taxon>Haplorrhini</taxon>
        <taxon>Catarrhini</taxon>
        <taxon>Hominidae</taxon>
        <taxon>Homo</taxon>
    </lineage>
</organism>
<sequence>MAPWTLWRCCQRVVGWVPVLFITFVVVWSYYAYVVELCVFTIFGNEENGKTVVYLVAFHLFFVMFVWSYWMTIFTSPASPSKEFYLSNSEKERYEKEFSQERQQEILRRAARALPIYTTSASKTIRYCEKCQLIKPDRAHHCSACDSCILKMDHHCPWVNNCVGFSNYKFFLLFLLYSLLYCLFVAATVLEYFIKFWTNELTDTRAKFHVLFLFFVSAMFFISVLSLFSYHCWLVGKNRTTIESFRAPTFSYGPDGNGFSLGCSKNWRQVFGDEKKYWLLPIFSSLGDGCSFPTRLVGMDPEQASVTNQNEYARSSGSNQPFPIKPLSESKNRLLDSESQWLENGAEEGIVKSGTNNHVTVAIEN</sequence>
<keyword id="KW-0002">3D-structure</keyword>
<keyword id="KW-0012">Acyltransferase</keyword>
<keyword id="KW-0025">Alternative splicing</keyword>
<keyword id="KW-1003">Cell membrane</keyword>
<keyword id="KW-0963">Cytoplasm</keyword>
<keyword id="KW-0256">Endoplasmic reticulum</keyword>
<keyword id="KW-0333">Golgi apparatus</keyword>
<keyword id="KW-0945">Host-virus interaction</keyword>
<keyword id="KW-0449">Lipoprotein</keyword>
<keyword id="KW-0472">Membrane</keyword>
<keyword id="KW-0479">Metal-binding</keyword>
<keyword id="KW-0564">Palmitate</keyword>
<keyword id="KW-0597">Phosphoprotein</keyword>
<keyword id="KW-1267">Proteomics identification</keyword>
<keyword id="KW-1185">Reference proteome</keyword>
<keyword id="KW-0808">Transferase</keyword>
<keyword id="KW-0812">Transmembrane</keyword>
<keyword id="KW-1133">Transmembrane helix</keyword>
<keyword id="KW-0862">Zinc</keyword>
<reference key="1">
    <citation type="journal article" date="2004" name="Nature">
        <title>The DNA sequence and analysis of human chromosome 13.</title>
        <authorList>
            <person name="Dunham A."/>
            <person name="Matthews L.H."/>
            <person name="Burton J."/>
            <person name="Ashurst J.L."/>
            <person name="Howe K.L."/>
            <person name="Ashcroft K.J."/>
            <person name="Beare D.M."/>
            <person name="Burford D.C."/>
            <person name="Hunt S.E."/>
            <person name="Griffiths-Jones S."/>
            <person name="Jones M.C."/>
            <person name="Keenan S.J."/>
            <person name="Oliver K."/>
            <person name="Scott C.E."/>
            <person name="Ainscough R."/>
            <person name="Almeida J.P."/>
            <person name="Ambrose K.D."/>
            <person name="Andrews D.T."/>
            <person name="Ashwell R.I.S."/>
            <person name="Babbage A.K."/>
            <person name="Bagguley C.L."/>
            <person name="Bailey J."/>
            <person name="Bannerjee R."/>
            <person name="Barlow K.F."/>
            <person name="Bates K."/>
            <person name="Beasley H."/>
            <person name="Bird C.P."/>
            <person name="Bray-Allen S."/>
            <person name="Brown A.J."/>
            <person name="Brown J.Y."/>
            <person name="Burrill W."/>
            <person name="Carder C."/>
            <person name="Carter N.P."/>
            <person name="Chapman J.C."/>
            <person name="Clamp M.E."/>
            <person name="Clark S.Y."/>
            <person name="Clarke G."/>
            <person name="Clee C.M."/>
            <person name="Clegg S.C."/>
            <person name="Cobley V."/>
            <person name="Collins J.E."/>
            <person name="Corby N."/>
            <person name="Coville G.J."/>
            <person name="Deloukas P."/>
            <person name="Dhami P."/>
            <person name="Dunham I."/>
            <person name="Dunn M."/>
            <person name="Earthrowl M.E."/>
            <person name="Ellington A.G."/>
            <person name="Faulkner L."/>
            <person name="Frankish A.G."/>
            <person name="Frankland J."/>
            <person name="French L."/>
            <person name="Garner P."/>
            <person name="Garnett J."/>
            <person name="Gilbert J.G.R."/>
            <person name="Gilson C.J."/>
            <person name="Ghori J."/>
            <person name="Grafham D.V."/>
            <person name="Gribble S.M."/>
            <person name="Griffiths C."/>
            <person name="Hall R.E."/>
            <person name="Hammond S."/>
            <person name="Harley J.L."/>
            <person name="Hart E.A."/>
            <person name="Heath P.D."/>
            <person name="Howden P.J."/>
            <person name="Huckle E.J."/>
            <person name="Hunt P.J."/>
            <person name="Hunt A.R."/>
            <person name="Johnson C."/>
            <person name="Johnson D."/>
            <person name="Kay M."/>
            <person name="Kimberley A.M."/>
            <person name="King A."/>
            <person name="Laird G.K."/>
            <person name="Langford C.J."/>
            <person name="Lawlor S."/>
            <person name="Leongamornlert D.A."/>
            <person name="Lloyd D.M."/>
            <person name="Lloyd C."/>
            <person name="Loveland J.E."/>
            <person name="Lovell J."/>
            <person name="Martin S."/>
            <person name="Mashreghi-Mohammadi M."/>
            <person name="McLaren S.J."/>
            <person name="McMurray A."/>
            <person name="Milne S."/>
            <person name="Moore M.J.F."/>
            <person name="Nickerson T."/>
            <person name="Palmer S.A."/>
            <person name="Pearce A.V."/>
            <person name="Peck A.I."/>
            <person name="Pelan S."/>
            <person name="Phillimore B."/>
            <person name="Porter K.M."/>
            <person name="Rice C.M."/>
            <person name="Searle S."/>
            <person name="Sehra H.K."/>
            <person name="Shownkeen R."/>
            <person name="Skuce C.D."/>
            <person name="Smith M."/>
            <person name="Steward C.A."/>
            <person name="Sycamore N."/>
            <person name="Tester J."/>
            <person name="Thomas D.W."/>
            <person name="Tracey A."/>
            <person name="Tromans A."/>
            <person name="Tubby B."/>
            <person name="Wall M."/>
            <person name="Wallis J.M."/>
            <person name="West A.P."/>
            <person name="Whitehead S.L."/>
            <person name="Willey D.L."/>
            <person name="Wilming L."/>
            <person name="Wray P.W."/>
            <person name="Wright M.W."/>
            <person name="Young L."/>
            <person name="Coulson A."/>
            <person name="Durbin R.M."/>
            <person name="Hubbard T."/>
            <person name="Sulston J.E."/>
            <person name="Beck S."/>
            <person name="Bentley D.R."/>
            <person name="Rogers J."/>
            <person name="Ross M.T."/>
        </authorList>
    </citation>
    <scope>NUCLEOTIDE SEQUENCE [LARGE SCALE GENOMIC DNA]</scope>
</reference>
<reference key="2">
    <citation type="submission" date="2005-07" db="EMBL/GenBank/DDBJ databases">
        <authorList>
            <person name="Mural R.J."/>
            <person name="Istrail S."/>
            <person name="Sutton G.G."/>
            <person name="Florea L."/>
            <person name="Halpern A.L."/>
            <person name="Mobarry C.M."/>
            <person name="Lippert R."/>
            <person name="Walenz B."/>
            <person name="Shatkay H."/>
            <person name="Dew I."/>
            <person name="Miller J.R."/>
            <person name="Flanigan M.J."/>
            <person name="Edwards N.J."/>
            <person name="Bolanos R."/>
            <person name="Fasulo D."/>
            <person name="Halldorsson B.V."/>
            <person name="Hannenhalli S."/>
            <person name="Turner R."/>
            <person name="Yooseph S."/>
            <person name="Lu F."/>
            <person name="Nusskern D.R."/>
            <person name="Shue B.C."/>
            <person name="Zheng X.H."/>
            <person name="Zhong F."/>
            <person name="Delcher A.L."/>
            <person name="Huson D.H."/>
            <person name="Kravitz S.A."/>
            <person name="Mouchard L."/>
            <person name="Reinert K."/>
            <person name="Remington K.A."/>
            <person name="Clark A.G."/>
            <person name="Waterman M.S."/>
            <person name="Eichler E.E."/>
            <person name="Adams M.D."/>
            <person name="Hunkapiller M.W."/>
            <person name="Myers E.W."/>
            <person name="Venter J.C."/>
        </authorList>
    </citation>
    <scope>NUCLEOTIDE SEQUENCE [LARGE SCALE GENOMIC DNA]</scope>
</reference>
<reference key="3">
    <citation type="journal article" date="2004" name="Genome Res.">
        <title>The status, quality, and expansion of the NIH full-length cDNA project: the Mammalian Gene Collection (MGC).</title>
        <authorList>
            <consortium name="The MGC Project Team"/>
        </authorList>
    </citation>
    <scope>NUCLEOTIDE SEQUENCE [LARGE SCALE MRNA] (ISOFORMS 2; 3 AND 4)</scope>
    <source>
        <tissue>Ovary</tissue>
        <tissue>Testis</tissue>
    </source>
</reference>
<reference key="4">
    <citation type="journal article" date="2007" name="Science">
        <title>ATM and ATR substrate analysis reveals extensive protein networks responsive to DNA damage.</title>
        <authorList>
            <person name="Matsuoka S."/>
            <person name="Ballif B.A."/>
            <person name="Smogorzewska A."/>
            <person name="McDonald E.R. III"/>
            <person name="Hurov K.E."/>
            <person name="Luo J."/>
            <person name="Bakalarski C.E."/>
            <person name="Zhao Z."/>
            <person name="Solimini N."/>
            <person name="Lerenthal Y."/>
            <person name="Shiloh Y."/>
            <person name="Gygi S.P."/>
            <person name="Elledge S.J."/>
        </authorList>
    </citation>
    <scope>PHOSPHORYLATION [LARGE SCALE ANALYSIS] AT SER-339</scope>
    <scope>IDENTIFICATION BY MASS SPECTROMETRY [LARGE SCALE ANALYSIS]</scope>
    <source>
        <tissue>Embryonic kidney</tissue>
    </source>
</reference>
<reference key="5">
    <citation type="journal article" date="2008" name="Proc. Natl. Acad. Sci. U.S.A.">
        <title>A quantitative atlas of mitotic phosphorylation.</title>
        <authorList>
            <person name="Dephoure N."/>
            <person name="Zhou C."/>
            <person name="Villen J."/>
            <person name="Beausoleil S.A."/>
            <person name="Bakalarski C.E."/>
            <person name="Elledge S.J."/>
            <person name="Gygi S.P."/>
        </authorList>
    </citation>
    <scope>IDENTIFICATION BY MASS SPECTROMETRY [LARGE SCALE ANALYSIS]</scope>
    <source>
        <tissue>Cervix carcinoma</tissue>
    </source>
</reference>
<reference key="6">
    <citation type="journal article" date="2013" name="J. Proteome Res.">
        <title>Toward a comprehensive characterization of a human cancer cell phosphoproteome.</title>
        <authorList>
            <person name="Zhou H."/>
            <person name="Di Palma S."/>
            <person name="Preisinger C."/>
            <person name="Peng M."/>
            <person name="Polat A.N."/>
            <person name="Heck A.J."/>
            <person name="Mohammed S."/>
        </authorList>
    </citation>
    <scope>PHOSPHORYLATION [LARGE SCALE ANALYSIS] AT SER-305 AND SER-330</scope>
    <scope>IDENTIFICATION BY MASS SPECTROMETRY [LARGE SCALE ANALYSIS]</scope>
    <source>
        <tissue>Cervix carcinoma</tissue>
        <tissue>Erythroleukemia</tissue>
    </source>
</reference>
<reference key="7">
    <citation type="journal article" date="2014" name="J. Proteomics">
        <title>An enzyme assisted RP-RPLC approach for in-depth analysis of human liver phosphoproteome.</title>
        <authorList>
            <person name="Bian Y."/>
            <person name="Song C."/>
            <person name="Cheng K."/>
            <person name="Dong M."/>
            <person name="Wang F."/>
            <person name="Huang J."/>
            <person name="Sun D."/>
            <person name="Wang L."/>
            <person name="Ye M."/>
            <person name="Zou H."/>
        </authorList>
    </citation>
    <scope>IDENTIFICATION BY MASS SPECTROMETRY [LARGE SCALE ANALYSIS]</scope>
    <source>
        <tissue>Liver</tissue>
    </source>
</reference>
<reference key="8">
    <citation type="journal article" date="2016" name="Mol. Cell">
        <title>Inhibition of DHHC20-Mediated EGFR Palmitoylation Creates a Dependence on EGFR Signaling.</title>
        <authorList>
            <person name="Runkle K.B."/>
            <person name="Kharbanda A."/>
            <person name="Stypulkowski E."/>
            <person name="Cao X.J."/>
            <person name="Wang W."/>
            <person name="Garcia B.A."/>
            <person name="Witze E.S."/>
        </authorList>
    </citation>
    <scope>FUNCTION</scope>
    <scope>CATALYTIC ACTIVITY</scope>
    <scope>SUBCELLULAR LOCATION</scope>
</reference>
<reference key="9">
    <citation type="journal article" date="2021" name="Dev. Cell">
        <title>S-acylation controls SARS-CoV-2 membrane lipid organization and enhances infectivity.</title>
        <authorList>
            <person name="Mesquita F.S."/>
            <person name="Abrami L."/>
            <person name="Sergeeva O."/>
            <person name="Turelli P."/>
            <person name="Qing E."/>
            <person name="Kunz B."/>
            <person name="Raclot C."/>
            <person name="Paz Montoya J."/>
            <person name="Abriata L.A."/>
            <person name="Gallagher T."/>
            <person name="Dal Peraro M."/>
            <person name="Trono D."/>
            <person name="D'Angelo G."/>
            <person name="van der Goot F.G."/>
        </authorList>
    </citation>
    <scope>FUNCTION (MICROBIAL INFECTION)</scope>
    <scope>SUBCELLULAR LOCATION</scope>
    <scope>CATALYTIC ACTIVITY</scope>
</reference>
<reference key="10">
    <citation type="journal article" date="2021" name="J. Biol. Chem.">
        <title>Metallo-beta-Lactamase Domain-Containing Protein 2 (MBLAC2) is S-palmitoylated and exhibits acyl-CoA hydrolase activity.</title>
        <authorList>
            <person name="Malgapo M.I.P."/>
            <person name="Safadi J.M."/>
            <person name="Linder M.E."/>
        </authorList>
    </citation>
    <scope>FUNCTION</scope>
    <scope>CATALYTIC ACTIVITY</scope>
</reference>
<reference evidence="15 16 17" key="11">
    <citation type="journal article" date="2018" name="Science">
        <title>Fatty acyl recognition and transfer by an integral membrane S-acyltransferase.</title>
        <authorList>
            <person name="Rana M.S."/>
            <person name="Kumar P."/>
            <person name="Lee C.J."/>
            <person name="Verardi R."/>
            <person name="Rajashankar K.R."/>
            <person name="Banerjee A."/>
        </authorList>
    </citation>
    <scope>X-RAY CRYSTALLOGRAPHY (2.25 ANGSTROMS) OF 5-299 IN COMPLEX WITH PALMITATE; SUBSTRATE ANALOG AND ZINC</scope>
    <scope>FUNCTION</scope>
    <scope>CATALYTIC ACTIVITY</scope>
    <scope>DOMAIN</scope>
    <scope>MUTAGENESIS OF ILE-22; SER-29; ASP-153; HIS-154; CYS-156; TRP-158; PHE-171; PHE-174; TYR-181; LEU-227; 240-THR-THR-241; GLU-243; ASN-266; TRP-267 AND PHE-271</scope>
    <scope>ACTIVE SITE</scope>
    <scope>SUBCELLULAR LOCATION</scope>
    <scope>TOPOLOGY</scope>
    <scope>PALMITOYLATION</scope>
</reference>
<dbReference type="EC" id="2.3.1.225" evidence="4 5"/>
<dbReference type="EC" id="2.3.1.-" evidence="12"/>
<dbReference type="EMBL" id="AL136219">
    <property type="status" value="NOT_ANNOTATED_CDS"/>
    <property type="molecule type" value="Genomic_DNA"/>
</dbReference>
<dbReference type="EMBL" id="CH471075">
    <property type="protein sequence ID" value="EAX08309.1"/>
    <property type="molecule type" value="Genomic_DNA"/>
</dbReference>
<dbReference type="EMBL" id="BC034944">
    <property type="protein sequence ID" value="AAH34944.1"/>
    <property type="molecule type" value="mRNA"/>
</dbReference>
<dbReference type="EMBL" id="BC050367">
    <property type="protein sequence ID" value="AAH50367.2"/>
    <property type="molecule type" value="mRNA"/>
</dbReference>
<dbReference type="EMBL" id="BC067898">
    <property type="protein sequence ID" value="AAH67898.1"/>
    <property type="molecule type" value="mRNA"/>
</dbReference>
<dbReference type="EMBL" id="BC110517">
    <property type="protein sequence ID" value="AAI10518.1"/>
    <property type="molecule type" value="mRNA"/>
</dbReference>
<dbReference type="CCDS" id="CCDS45017.1">
    <molecule id="Q5W0Z9-3"/>
</dbReference>
<dbReference type="CCDS" id="CCDS81758.1">
    <molecule id="Q5W0Z9-1"/>
</dbReference>
<dbReference type="RefSeq" id="NP_001273567.1">
    <property type="nucleotide sequence ID" value="NM_001286638.1"/>
</dbReference>
<dbReference type="RefSeq" id="NP_001316988.1">
    <molecule id="Q5W0Z9-1"/>
    <property type="nucleotide sequence ID" value="NM_001330059.2"/>
</dbReference>
<dbReference type="RefSeq" id="NP_694983.2">
    <molecule id="Q5W0Z9-3"/>
    <property type="nucleotide sequence ID" value="NM_153251.3"/>
</dbReference>
<dbReference type="RefSeq" id="XP_047286198.1">
    <molecule id="Q5W0Z9-4"/>
    <property type="nucleotide sequence ID" value="XM_047430242.1"/>
</dbReference>
<dbReference type="RefSeq" id="XP_054230367.1">
    <molecule id="Q5W0Z9-4"/>
    <property type="nucleotide sequence ID" value="XM_054374392.1"/>
</dbReference>
<dbReference type="PDB" id="6BML">
    <property type="method" value="X-ray"/>
    <property type="resolution" value="2.95 A"/>
    <property type="chains" value="A/B=5-299"/>
</dbReference>
<dbReference type="PDB" id="6BMM">
    <property type="method" value="X-ray"/>
    <property type="resolution" value="2.35 A"/>
    <property type="chains" value="A/B=7-299"/>
</dbReference>
<dbReference type="PDB" id="6BMN">
    <property type="method" value="X-ray"/>
    <property type="resolution" value="2.25 A"/>
    <property type="chains" value="A/B=5-299"/>
</dbReference>
<dbReference type="PDB" id="7KHM">
    <property type="method" value="X-ray"/>
    <property type="resolution" value="2.88 A"/>
    <property type="chains" value="A/B=2-316"/>
</dbReference>
<dbReference type="PDBsum" id="6BML"/>
<dbReference type="PDBsum" id="6BMM"/>
<dbReference type="PDBsum" id="6BMN"/>
<dbReference type="PDBsum" id="7KHM"/>
<dbReference type="SMR" id="Q5W0Z9"/>
<dbReference type="BioGRID" id="128991">
    <property type="interactions" value="42"/>
</dbReference>
<dbReference type="FunCoup" id="Q5W0Z9">
    <property type="interactions" value="2073"/>
</dbReference>
<dbReference type="IntAct" id="Q5W0Z9">
    <property type="interactions" value="22"/>
</dbReference>
<dbReference type="MINT" id="Q5W0Z9"/>
<dbReference type="STRING" id="9606.ENSP00000383433"/>
<dbReference type="BindingDB" id="Q5W0Z9"/>
<dbReference type="ChEMBL" id="CHEMBL5169156"/>
<dbReference type="TCDB" id="8.A.114.1.6">
    <property type="family name" value="the huntington-interacting protein 14 (hip14) family"/>
</dbReference>
<dbReference type="iPTMnet" id="Q5W0Z9"/>
<dbReference type="PhosphoSitePlus" id="Q5W0Z9"/>
<dbReference type="SwissPalm" id="Q5W0Z9"/>
<dbReference type="BioMuta" id="ZDHHC20"/>
<dbReference type="DMDM" id="74748004"/>
<dbReference type="jPOST" id="Q5W0Z9"/>
<dbReference type="MassIVE" id="Q5W0Z9"/>
<dbReference type="PaxDb" id="9606-ENSP00000371905"/>
<dbReference type="PeptideAtlas" id="Q5W0Z9"/>
<dbReference type="ProteomicsDB" id="61482"/>
<dbReference type="ProteomicsDB" id="65788">
    <molecule id="Q5W0Z9-1"/>
</dbReference>
<dbReference type="ProteomicsDB" id="65789">
    <molecule id="Q5W0Z9-2"/>
</dbReference>
<dbReference type="ProteomicsDB" id="65790">
    <molecule id="Q5W0Z9-3"/>
</dbReference>
<dbReference type="Pumba" id="Q5W0Z9"/>
<dbReference type="Antibodypedia" id="4929">
    <property type="antibodies" value="187 antibodies from 24 providers"/>
</dbReference>
<dbReference type="DNASU" id="253832"/>
<dbReference type="Ensembl" id="ENST00000320220.13">
    <molecule id="Q5W0Z9-4"/>
    <property type="protein sequence ID" value="ENSP00000313583.9"/>
    <property type="gene ID" value="ENSG00000180776.17"/>
</dbReference>
<dbReference type="Ensembl" id="ENST00000382466.7">
    <molecule id="Q5W0Z9-3"/>
    <property type="protein sequence ID" value="ENSP00000371905.3"/>
    <property type="gene ID" value="ENSG00000180776.17"/>
</dbReference>
<dbReference type="Ensembl" id="ENST00000400590.8">
    <molecule id="Q5W0Z9-1"/>
    <property type="protein sequence ID" value="ENSP00000383433.3"/>
    <property type="gene ID" value="ENSG00000180776.17"/>
</dbReference>
<dbReference type="Ensembl" id="ENST00000415724.2">
    <molecule id="Q5W0Z9-1"/>
    <property type="protein sequence ID" value="ENSP00000401232.1"/>
    <property type="gene ID" value="ENSG00000180776.17"/>
</dbReference>
<dbReference type="GeneID" id="253832"/>
<dbReference type="KEGG" id="hsa:253832"/>
<dbReference type="MANE-Select" id="ENST00000400590.8">
    <property type="protein sequence ID" value="ENSP00000383433.3"/>
    <property type="RefSeq nucleotide sequence ID" value="NM_001330059.2"/>
    <property type="RefSeq protein sequence ID" value="NP_001316988.1"/>
</dbReference>
<dbReference type="UCSC" id="uc001uoa.4">
    <molecule id="Q5W0Z9-1"/>
    <property type="organism name" value="human"/>
</dbReference>
<dbReference type="AGR" id="HGNC:20749"/>
<dbReference type="CTD" id="253832"/>
<dbReference type="DisGeNET" id="253832"/>
<dbReference type="GeneCards" id="ZDHHC20"/>
<dbReference type="HGNC" id="HGNC:20749">
    <property type="gene designation" value="ZDHHC20"/>
</dbReference>
<dbReference type="HPA" id="ENSG00000180776">
    <property type="expression patterns" value="Low tissue specificity"/>
</dbReference>
<dbReference type="MIM" id="617972">
    <property type="type" value="gene"/>
</dbReference>
<dbReference type="neXtProt" id="NX_Q5W0Z9"/>
<dbReference type="OpenTargets" id="ENSG00000180776"/>
<dbReference type="PharmGKB" id="PA134880838"/>
<dbReference type="VEuPathDB" id="HostDB:ENSG00000180776"/>
<dbReference type="eggNOG" id="KOG1315">
    <property type="taxonomic scope" value="Eukaryota"/>
</dbReference>
<dbReference type="GeneTree" id="ENSGT00940000153716"/>
<dbReference type="InParanoid" id="Q5W0Z9"/>
<dbReference type="OMA" id="EQHANNT"/>
<dbReference type="OrthoDB" id="9909019at2759"/>
<dbReference type="PAN-GO" id="Q5W0Z9">
    <property type="GO annotations" value="5 GO annotations based on evolutionary models"/>
</dbReference>
<dbReference type="PhylomeDB" id="Q5W0Z9"/>
<dbReference type="TreeFam" id="TF316044"/>
<dbReference type="PathwayCommons" id="Q5W0Z9"/>
<dbReference type="Reactome" id="R-HSA-9694548">
    <property type="pathway name" value="Maturation of spike protein"/>
</dbReference>
<dbReference type="SignaLink" id="Q5W0Z9"/>
<dbReference type="BioGRID-ORCS" id="253832">
    <property type="hits" value="19 hits in 1154 CRISPR screens"/>
</dbReference>
<dbReference type="ChiTaRS" id="ZDHHC20">
    <property type="organism name" value="human"/>
</dbReference>
<dbReference type="GenomeRNAi" id="253832"/>
<dbReference type="Pharos" id="Q5W0Z9">
    <property type="development level" value="Tbio"/>
</dbReference>
<dbReference type="PRO" id="PR:Q5W0Z9"/>
<dbReference type="Proteomes" id="UP000005640">
    <property type="component" value="Chromosome 13"/>
</dbReference>
<dbReference type="RNAct" id="Q5W0Z9">
    <property type="molecule type" value="protein"/>
</dbReference>
<dbReference type="Bgee" id="ENSG00000180776">
    <property type="expression patterns" value="Expressed in upper arm skin and 191 other cell types or tissues"/>
</dbReference>
<dbReference type="ExpressionAtlas" id="Q5W0Z9">
    <property type="expression patterns" value="baseline and differential"/>
</dbReference>
<dbReference type="GO" id="GO:0005783">
    <property type="term" value="C:endoplasmic reticulum"/>
    <property type="evidence" value="ECO:0000318"/>
    <property type="project" value="GO_Central"/>
</dbReference>
<dbReference type="GO" id="GO:0005789">
    <property type="term" value="C:endoplasmic reticulum membrane"/>
    <property type="evidence" value="ECO:0000304"/>
    <property type="project" value="UniProt"/>
</dbReference>
<dbReference type="GO" id="GO:0033116">
    <property type="term" value="C:endoplasmic reticulum-Golgi intermediate compartment membrane"/>
    <property type="evidence" value="ECO:0007669"/>
    <property type="project" value="UniProtKB-SubCell"/>
</dbReference>
<dbReference type="GO" id="GO:0005794">
    <property type="term" value="C:Golgi apparatus"/>
    <property type="evidence" value="ECO:0000318"/>
    <property type="project" value="GO_Central"/>
</dbReference>
<dbReference type="GO" id="GO:0000139">
    <property type="term" value="C:Golgi membrane"/>
    <property type="evidence" value="ECO:0000315"/>
    <property type="project" value="UniProtKB"/>
</dbReference>
<dbReference type="GO" id="GO:0043231">
    <property type="term" value="C:intracellular membrane-bounded organelle"/>
    <property type="evidence" value="ECO:0000314"/>
    <property type="project" value="HPA"/>
</dbReference>
<dbReference type="GO" id="GO:0016020">
    <property type="term" value="C:membrane"/>
    <property type="evidence" value="ECO:0007005"/>
    <property type="project" value="UniProtKB"/>
</dbReference>
<dbReference type="GO" id="GO:0048471">
    <property type="term" value="C:perinuclear region of cytoplasm"/>
    <property type="evidence" value="ECO:0007669"/>
    <property type="project" value="UniProtKB-SubCell"/>
</dbReference>
<dbReference type="GO" id="GO:0005886">
    <property type="term" value="C:plasma membrane"/>
    <property type="evidence" value="ECO:0000314"/>
    <property type="project" value="HPA"/>
</dbReference>
<dbReference type="GO" id="GO:0016409">
    <property type="term" value="F:palmitoyltransferase activity"/>
    <property type="evidence" value="ECO:0000314"/>
    <property type="project" value="UniProtKB"/>
</dbReference>
<dbReference type="GO" id="GO:0019705">
    <property type="term" value="F:protein-cysteine S-myristoyltransferase activity"/>
    <property type="evidence" value="ECO:0007669"/>
    <property type="project" value="RHEA"/>
</dbReference>
<dbReference type="GO" id="GO:0019706">
    <property type="term" value="F:protein-cysteine S-palmitoyltransferase activity"/>
    <property type="evidence" value="ECO:0000314"/>
    <property type="project" value="UniProtKB"/>
</dbReference>
<dbReference type="GO" id="GO:0140439">
    <property type="term" value="F:protein-cysteine S-stearoyltransferase activity"/>
    <property type="evidence" value="ECO:0007669"/>
    <property type="project" value="RHEA"/>
</dbReference>
<dbReference type="GO" id="GO:0008270">
    <property type="term" value="F:zinc ion binding"/>
    <property type="evidence" value="ECO:0000314"/>
    <property type="project" value="UniProtKB"/>
</dbReference>
<dbReference type="GO" id="GO:0018230">
    <property type="term" value="P:peptidyl-L-cysteine S-palmitoylation"/>
    <property type="evidence" value="ECO:0000314"/>
    <property type="project" value="UniProtKB"/>
</dbReference>
<dbReference type="GO" id="GO:0044794">
    <property type="term" value="P:positive regulation by host of viral process"/>
    <property type="evidence" value="ECO:0000314"/>
    <property type="project" value="UniProtKB"/>
</dbReference>
<dbReference type="GO" id="GO:0018345">
    <property type="term" value="P:protein palmitoylation"/>
    <property type="evidence" value="ECO:0000314"/>
    <property type="project" value="UniProtKB"/>
</dbReference>
<dbReference type="GO" id="GO:0006612">
    <property type="term" value="P:protein targeting to membrane"/>
    <property type="evidence" value="ECO:0000318"/>
    <property type="project" value="GO_Central"/>
</dbReference>
<dbReference type="GO" id="GO:0016188">
    <property type="term" value="P:synaptic vesicle maturation"/>
    <property type="evidence" value="ECO:0000318"/>
    <property type="project" value="GO_Central"/>
</dbReference>
<dbReference type="InterPro" id="IPR001594">
    <property type="entry name" value="Palmitoyltrfase_DHHC"/>
</dbReference>
<dbReference type="InterPro" id="IPR039859">
    <property type="entry name" value="PFA4/ZDH16/20/ERF2-like"/>
</dbReference>
<dbReference type="PANTHER" id="PTHR12246">
    <property type="entry name" value="PALMITOYLTRANSFERASE ZDHHC16"/>
    <property type="match status" value="1"/>
</dbReference>
<dbReference type="Pfam" id="PF01529">
    <property type="entry name" value="DHHC"/>
    <property type="match status" value="1"/>
</dbReference>
<dbReference type="PROSITE" id="PS50216">
    <property type="entry name" value="DHHC"/>
    <property type="match status" value="1"/>
</dbReference>
<gene>
    <name evidence="14" type="primary">ZDHHC20</name>
</gene>